<protein>
    <recommendedName>
        <fullName>Uncharacterized protein YPL152W-A</fullName>
    </recommendedName>
</protein>
<accession>Q8TGR9</accession>
<accession>D6W3L6</accession>
<reference key="1">
    <citation type="journal article" date="1996" name="Yeast">
        <title>The sequence of 55 kb on the left arm of yeast chromosome XVI identifies a small nuclear RNA, a new putative protein kinase and two new putative regulators.</title>
        <authorList>
            <person name="Purnelle B."/>
            <person name="Coster F."/>
            <person name="Goffeau A."/>
        </authorList>
    </citation>
    <scope>NUCLEOTIDE SEQUENCE [GENOMIC DNA]</scope>
    <source>
        <strain>ATCC 204511 / S288c / AB972</strain>
    </source>
</reference>
<reference key="2">
    <citation type="journal article" date="1997" name="Nature">
        <title>The nucleotide sequence of Saccharomyces cerevisiae chromosome XVI.</title>
        <authorList>
            <person name="Bussey H."/>
            <person name="Storms R.K."/>
            <person name="Ahmed A."/>
            <person name="Albermann K."/>
            <person name="Allen E."/>
            <person name="Ansorge W."/>
            <person name="Araujo R."/>
            <person name="Aparicio A."/>
            <person name="Barrell B.G."/>
            <person name="Badcock K."/>
            <person name="Benes V."/>
            <person name="Botstein D."/>
            <person name="Bowman S."/>
            <person name="Brueckner M."/>
            <person name="Carpenter J."/>
            <person name="Cherry J.M."/>
            <person name="Chung E."/>
            <person name="Churcher C.M."/>
            <person name="Coster F."/>
            <person name="Davis K."/>
            <person name="Davis R.W."/>
            <person name="Dietrich F.S."/>
            <person name="Delius H."/>
            <person name="DiPaolo T."/>
            <person name="Dubois E."/>
            <person name="Duesterhoeft A."/>
            <person name="Duncan M."/>
            <person name="Floeth M."/>
            <person name="Fortin N."/>
            <person name="Friesen J.D."/>
            <person name="Fritz C."/>
            <person name="Goffeau A."/>
            <person name="Hall J."/>
            <person name="Hebling U."/>
            <person name="Heumann K."/>
            <person name="Hilbert H."/>
            <person name="Hillier L.W."/>
            <person name="Hunicke-Smith S."/>
            <person name="Hyman R.W."/>
            <person name="Johnston M."/>
            <person name="Kalman S."/>
            <person name="Kleine K."/>
            <person name="Komp C."/>
            <person name="Kurdi O."/>
            <person name="Lashkari D."/>
            <person name="Lew H."/>
            <person name="Lin A."/>
            <person name="Lin D."/>
            <person name="Louis E.J."/>
            <person name="Marathe R."/>
            <person name="Messenguy F."/>
            <person name="Mewes H.-W."/>
            <person name="Mirtipati S."/>
            <person name="Moestl D."/>
            <person name="Mueller-Auer S."/>
            <person name="Namath A."/>
            <person name="Nentwich U."/>
            <person name="Oefner P."/>
            <person name="Pearson D."/>
            <person name="Petel F.X."/>
            <person name="Pohl T.M."/>
            <person name="Purnelle B."/>
            <person name="Rajandream M.A."/>
            <person name="Rechmann S."/>
            <person name="Rieger M."/>
            <person name="Riles L."/>
            <person name="Roberts D."/>
            <person name="Schaefer M."/>
            <person name="Scharfe M."/>
            <person name="Scherens B."/>
            <person name="Schramm S."/>
            <person name="Schroeder M."/>
            <person name="Sdicu A.-M."/>
            <person name="Tettelin H."/>
            <person name="Urrestarazu L.A."/>
            <person name="Ushinsky S."/>
            <person name="Vierendeels F."/>
            <person name="Vissers S."/>
            <person name="Voss H."/>
            <person name="Walsh S.V."/>
            <person name="Wambutt R."/>
            <person name="Wang Y."/>
            <person name="Wedler E."/>
            <person name="Wedler H."/>
            <person name="Winnett E."/>
            <person name="Zhong W.-W."/>
            <person name="Zollner A."/>
            <person name="Vo D.H."/>
            <person name="Hani J."/>
        </authorList>
    </citation>
    <scope>NUCLEOTIDE SEQUENCE [LARGE SCALE GENOMIC DNA]</scope>
    <source>
        <strain>ATCC 204508 / S288c</strain>
    </source>
</reference>
<reference key="3">
    <citation type="journal article" date="2014" name="G3 (Bethesda)">
        <title>The reference genome sequence of Saccharomyces cerevisiae: Then and now.</title>
        <authorList>
            <person name="Engel S.R."/>
            <person name="Dietrich F.S."/>
            <person name="Fisk D.G."/>
            <person name="Binkley G."/>
            <person name="Balakrishnan R."/>
            <person name="Costanzo M.C."/>
            <person name="Dwight S.S."/>
            <person name="Hitz B.C."/>
            <person name="Karra K."/>
            <person name="Nash R.S."/>
            <person name="Weng S."/>
            <person name="Wong E.D."/>
            <person name="Lloyd P."/>
            <person name="Skrzypek M.S."/>
            <person name="Miyasato S.R."/>
            <person name="Simison M."/>
            <person name="Cherry J.M."/>
        </authorList>
    </citation>
    <scope>GENOME REANNOTATION</scope>
    <source>
        <strain>ATCC 204508 / S288c</strain>
    </source>
</reference>
<reference key="4">
    <citation type="journal article" date="2002" name="Nat. Biotechnol.">
        <title>An integrated approach for finding overlooked genes in yeast.</title>
        <authorList>
            <person name="Kumar A."/>
            <person name="Harrison P.M."/>
            <person name="Cheung K.-H."/>
            <person name="Lan N."/>
            <person name="Echols N."/>
            <person name="Bertone P."/>
            <person name="Miller P."/>
            <person name="Gerstein M.B."/>
            <person name="Snyder M."/>
        </authorList>
    </citation>
    <scope>NUCLEOTIDE SEQUENCE [GENOMIC DNA]</scope>
</reference>
<sequence>MMVHLTLKSHLIKEELLWHALSPSYSCRYHGR</sequence>
<keyword id="KW-1185">Reference proteome</keyword>
<gene>
    <name type="ordered locus">YPL152W-A</name>
</gene>
<name>YP152_YEAST</name>
<dbReference type="EMBL" id="X96770">
    <property type="status" value="NOT_ANNOTATED_CDS"/>
    <property type="molecule type" value="Genomic_DNA"/>
</dbReference>
<dbReference type="EMBL" id="Z73508">
    <property type="status" value="NOT_ANNOTATED_CDS"/>
    <property type="molecule type" value="Genomic_DNA"/>
</dbReference>
<dbReference type="EMBL" id="Z73509">
    <property type="status" value="NOT_ANNOTATED_CDS"/>
    <property type="molecule type" value="Genomic_DNA"/>
</dbReference>
<dbReference type="EMBL" id="AF479916">
    <property type="protein sequence ID" value="AAL79229.1"/>
    <property type="molecule type" value="Genomic_DNA"/>
</dbReference>
<dbReference type="EMBL" id="BK006949">
    <property type="protein sequence ID" value="DAA11282.1"/>
    <property type="molecule type" value="Genomic_DNA"/>
</dbReference>
<dbReference type="RefSeq" id="NP_878180.1">
    <property type="nucleotide sequence ID" value="NM_001184627.1"/>
</dbReference>
<dbReference type="BioGRID" id="37061">
    <property type="interactions" value="5"/>
</dbReference>
<dbReference type="FunCoup" id="Q8TGR9">
    <property type="interactions" value="8"/>
</dbReference>
<dbReference type="STRING" id="4932.YPL152W-A"/>
<dbReference type="PaxDb" id="4932-YPL152W-A"/>
<dbReference type="EnsemblFungi" id="YPL152W-A_mRNA">
    <property type="protein sequence ID" value="YPL152W-A"/>
    <property type="gene ID" value="YPL152W-A"/>
</dbReference>
<dbReference type="GeneID" id="1466519"/>
<dbReference type="KEGG" id="sce:YPL152W-A"/>
<dbReference type="AGR" id="SGD:S000028721"/>
<dbReference type="SGD" id="S000028721">
    <property type="gene designation" value="YPL152W-A"/>
</dbReference>
<dbReference type="VEuPathDB" id="FungiDB:YPL152W-A"/>
<dbReference type="HOGENOM" id="CLU_3392525_0_0_1"/>
<dbReference type="InParanoid" id="Q8TGR9"/>
<dbReference type="BioCyc" id="YEAST:G3O-34366-MONOMER"/>
<dbReference type="BioGRID-ORCS" id="1466519">
    <property type="hits" value="0 hits in 10 CRISPR screens"/>
</dbReference>
<dbReference type="PRO" id="PR:Q8TGR9"/>
<dbReference type="Proteomes" id="UP000002311">
    <property type="component" value="Chromosome XVI"/>
</dbReference>
<proteinExistence type="predicted"/>
<feature type="chain" id="PRO_0000238654" description="Uncharacterized protein YPL152W-A">
    <location>
        <begin position="1"/>
        <end position="32"/>
    </location>
</feature>
<organism>
    <name type="scientific">Saccharomyces cerevisiae (strain ATCC 204508 / S288c)</name>
    <name type="common">Baker's yeast</name>
    <dbReference type="NCBI Taxonomy" id="559292"/>
    <lineage>
        <taxon>Eukaryota</taxon>
        <taxon>Fungi</taxon>
        <taxon>Dikarya</taxon>
        <taxon>Ascomycota</taxon>
        <taxon>Saccharomycotina</taxon>
        <taxon>Saccharomycetes</taxon>
        <taxon>Saccharomycetales</taxon>
        <taxon>Saccharomycetaceae</taxon>
        <taxon>Saccharomyces</taxon>
    </lineage>
</organism>